<name>HBB_SAISC</name>
<reference key="1">
    <citation type="submission" date="2003-04" db="EMBL/GenBank/DDBJ databases">
        <title>The molecular evolution of the primate beta globin gene: an evaluation of gene conversion and phylogeny and an analysis of phylogenetic footprints in noncoding DNA.</title>
        <authorList>
            <person name="Prychitko T.M."/>
            <person name="Goodman M."/>
            <person name="Johnson R.M."/>
        </authorList>
    </citation>
    <scope>NUCLEOTIDE SEQUENCE [GENOMIC DNA]</scope>
</reference>
<reference key="2">
    <citation type="journal article" date="1971" name="Biochem. Genet.">
        <title>Primate hemoglobins: some sequences and some proposals concerning the character of evolution and mutation.</title>
        <authorList>
            <person name="Boyer S.H."/>
            <person name="Crosby E.F."/>
            <person name="Noyes A.N."/>
            <person name="Fuller G.F."/>
            <person name="Leslie S.E."/>
            <person name="Donaldson L.J."/>
            <person name="Vrablik G.R."/>
            <person name="Schaefer E.W. Jr."/>
            <person name="Thurmon T.F."/>
        </authorList>
    </citation>
    <scope>PROTEIN SEQUENCE OF 2-147</scope>
    <scope>VARIANT THR-77</scope>
</reference>
<evidence type="ECO:0000250" key="1">
    <source>
        <dbReference type="UniProtKB" id="P02086"/>
    </source>
</evidence>
<evidence type="ECO:0000250" key="2">
    <source>
        <dbReference type="UniProtKB" id="P68871"/>
    </source>
</evidence>
<evidence type="ECO:0000255" key="3">
    <source>
        <dbReference type="PROSITE-ProRule" id="PRU00238"/>
    </source>
</evidence>
<evidence type="ECO:0000269" key="4">
    <source>
    </source>
</evidence>
<sequence>MVHLTGDEKAAVTALWGKVNVEDVGGEALGRLLVVYPWTQRFFESFGDLSTPDAVMNNPKVKAHGKKVLGAFSDGLAHLDNLKGTFAQLSELHCDKLHVDPENFRLLGNVLVCVLAHHFGKEFTPQVQAAYQKVVAGVANALAHKYH</sequence>
<gene>
    <name type="primary">HBB</name>
</gene>
<accession>P02036</accession>
<accession>Q6WN23</accession>
<feature type="initiator methionine" description="Removed" evidence="1 4">
    <location>
        <position position="1"/>
    </location>
</feature>
<feature type="chain" id="PRO_0000053099" description="Hemoglobin subunit beta">
    <location>
        <begin position="2"/>
        <end position="147"/>
    </location>
</feature>
<feature type="domain" description="Globin" evidence="3">
    <location>
        <begin position="3"/>
        <end position="147"/>
    </location>
</feature>
<feature type="binding site" description="distal binding residue">
    <location>
        <position position="64"/>
    </location>
    <ligand>
        <name>heme b</name>
        <dbReference type="ChEBI" id="CHEBI:60344"/>
    </ligand>
    <ligandPart>
        <name>Fe</name>
        <dbReference type="ChEBI" id="CHEBI:18248"/>
    </ligandPart>
</feature>
<feature type="binding site" description="proximal binding residue">
    <location>
        <position position="93"/>
    </location>
    <ligand>
        <name>heme b</name>
        <dbReference type="ChEBI" id="CHEBI:60344"/>
    </ligand>
    <ligandPart>
        <name>Fe</name>
        <dbReference type="ChEBI" id="CHEBI:18248"/>
    </ligandPart>
</feature>
<feature type="modified residue" description="N-acetylvaline" evidence="1">
    <location>
        <position position="2"/>
    </location>
</feature>
<feature type="modified residue" description="Phosphothreonine" evidence="2">
    <location>
        <position position="13"/>
    </location>
</feature>
<feature type="modified residue" description="Phosphoserine" evidence="2">
    <location>
        <position position="45"/>
    </location>
</feature>
<feature type="modified residue" description="N6-acetyllysine" evidence="2">
    <location>
        <position position="60"/>
    </location>
</feature>
<feature type="modified residue" description="N6-acetyllysine" evidence="2">
    <location>
        <position position="83"/>
    </location>
</feature>
<feature type="modified residue" description="S-nitrosocysteine" evidence="2">
    <location>
        <position position="94"/>
    </location>
</feature>
<feature type="modified residue" description="N6-acetyllysine" evidence="2">
    <location>
        <position position="145"/>
    </location>
</feature>
<feature type="sequence variant" description="In allelic sequence." evidence="4">
    <original>A</original>
    <variation>T</variation>
    <location>
        <position position="77"/>
    </location>
</feature>
<proteinExistence type="evidence at protein level"/>
<protein>
    <recommendedName>
        <fullName>Hemoglobin subunit beta</fullName>
    </recommendedName>
    <alternativeName>
        <fullName>Beta-globin</fullName>
    </alternativeName>
    <alternativeName>
        <fullName>Hemoglobin beta chain</fullName>
    </alternativeName>
</protein>
<organism>
    <name type="scientific">Saimiri sciureus</name>
    <name type="common">Common squirrel monkey</name>
    <dbReference type="NCBI Taxonomy" id="9521"/>
    <lineage>
        <taxon>Eukaryota</taxon>
        <taxon>Metazoa</taxon>
        <taxon>Chordata</taxon>
        <taxon>Craniata</taxon>
        <taxon>Vertebrata</taxon>
        <taxon>Euteleostomi</taxon>
        <taxon>Mammalia</taxon>
        <taxon>Eutheria</taxon>
        <taxon>Euarchontoglires</taxon>
        <taxon>Primates</taxon>
        <taxon>Haplorrhini</taxon>
        <taxon>Platyrrhini</taxon>
        <taxon>Cebidae</taxon>
        <taxon>Saimiriinae</taxon>
        <taxon>Saimiri</taxon>
    </lineage>
</organism>
<keyword id="KW-0007">Acetylation</keyword>
<keyword id="KW-0903">Direct protein sequencing</keyword>
<keyword id="KW-0349">Heme</keyword>
<keyword id="KW-0408">Iron</keyword>
<keyword id="KW-0479">Metal-binding</keyword>
<keyword id="KW-0561">Oxygen transport</keyword>
<keyword id="KW-0597">Phosphoprotein</keyword>
<keyword id="KW-0702">S-nitrosylation</keyword>
<keyword id="KW-0813">Transport</keyword>
<comment type="function">
    <text>Involved in oxygen transport from the lung to the various peripheral tissues.</text>
</comment>
<comment type="subunit">
    <text>Heterotetramer of two alpha chains and two beta chains.</text>
</comment>
<comment type="tissue specificity">
    <text>Red blood cells.</text>
</comment>
<comment type="similarity">
    <text evidence="3">Belongs to the globin family.</text>
</comment>
<dbReference type="EMBL" id="AY279116">
    <property type="protein sequence ID" value="AAQ18224.1"/>
    <property type="molecule type" value="Genomic_DNA"/>
</dbReference>
<dbReference type="PIR" id="A02357">
    <property type="entry name" value="HBMKS"/>
</dbReference>
<dbReference type="SMR" id="P02036"/>
<dbReference type="GO" id="GO:0072562">
    <property type="term" value="C:blood microparticle"/>
    <property type="evidence" value="ECO:0007669"/>
    <property type="project" value="TreeGrafter"/>
</dbReference>
<dbReference type="GO" id="GO:0031838">
    <property type="term" value="C:haptoglobin-hemoglobin complex"/>
    <property type="evidence" value="ECO:0007669"/>
    <property type="project" value="TreeGrafter"/>
</dbReference>
<dbReference type="GO" id="GO:0005833">
    <property type="term" value="C:hemoglobin complex"/>
    <property type="evidence" value="ECO:0007669"/>
    <property type="project" value="InterPro"/>
</dbReference>
<dbReference type="GO" id="GO:0031720">
    <property type="term" value="F:haptoglobin binding"/>
    <property type="evidence" value="ECO:0007669"/>
    <property type="project" value="TreeGrafter"/>
</dbReference>
<dbReference type="GO" id="GO:0020037">
    <property type="term" value="F:heme binding"/>
    <property type="evidence" value="ECO:0007669"/>
    <property type="project" value="InterPro"/>
</dbReference>
<dbReference type="GO" id="GO:0031721">
    <property type="term" value="F:hemoglobin alpha binding"/>
    <property type="evidence" value="ECO:0007669"/>
    <property type="project" value="TreeGrafter"/>
</dbReference>
<dbReference type="GO" id="GO:0046872">
    <property type="term" value="F:metal ion binding"/>
    <property type="evidence" value="ECO:0007669"/>
    <property type="project" value="UniProtKB-KW"/>
</dbReference>
<dbReference type="GO" id="GO:0043177">
    <property type="term" value="F:organic acid binding"/>
    <property type="evidence" value="ECO:0007669"/>
    <property type="project" value="TreeGrafter"/>
</dbReference>
<dbReference type="GO" id="GO:0019825">
    <property type="term" value="F:oxygen binding"/>
    <property type="evidence" value="ECO:0007669"/>
    <property type="project" value="InterPro"/>
</dbReference>
<dbReference type="GO" id="GO:0005344">
    <property type="term" value="F:oxygen carrier activity"/>
    <property type="evidence" value="ECO:0007669"/>
    <property type="project" value="UniProtKB-KW"/>
</dbReference>
<dbReference type="GO" id="GO:0004601">
    <property type="term" value="F:peroxidase activity"/>
    <property type="evidence" value="ECO:0007669"/>
    <property type="project" value="TreeGrafter"/>
</dbReference>
<dbReference type="GO" id="GO:0042744">
    <property type="term" value="P:hydrogen peroxide catabolic process"/>
    <property type="evidence" value="ECO:0007669"/>
    <property type="project" value="TreeGrafter"/>
</dbReference>
<dbReference type="CDD" id="cd08925">
    <property type="entry name" value="Hb-beta-like"/>
    <property type="match status" value="1"/>
</dbReference>
<dbReference type="FunFam" id="1.10.490.10:FF:000001">
    <property type="entry name" value="Hemoglobin subunit beta"/>
    <property type="match status" value="1"/>
</dbReference>
<dbReference type="Gene3D" id="1.10.490.10">
    <property type="entry name" value="Globins"/>
    <property type="match status" value="1"/>
</dbReference>
<dbReference type="InterPro" id="IPR000971">
    <property type="entry name" value="Globin"/>
</dbReference>
<dbReference type="InterPro" id="IPR009050">
    <property type="entry name" value="Globin-like_sf"/>
</dbReference>
<dbReference type="InterPro" id="IPR012292">
    <property type="entry name" value="Globin/Proto"/>
</dbReference>
<dbReference type="InterPro" id="IPR002337">
    <property type="entry name" value="Hemoglobin_b"/>
</dbReference>
<dbReference type="InterPro" id="IPR050056">
    <property type="entry name" value="Hemoglobin_oxygen_transport"/>
</dbReference>
<dbReference type="PANTHER" id="PTHR11442">
    <property type="entry name" value="HEMOGLOBIN FAMILY MEMBER"/>
    <property type="match status" value="1"/>
</dbReference>
<dbReference type="PANTHER" id="PTHR11442:SF42">
    <property type="entry name" value="HEMOGLOBIN SUBUNIT BETA"/>
    <property type="match status" value="1"/>
</dbReference>
<dbReference type="Pfam" id="PF00042">
    <property type="entry name" value="Globin"/>
    <property type="match status" value="1"/>
</dbReference>
<dbReference type="PRINTS" id="PR00814">
    <property type="entry name" value="BETAHAEM"/>
</dbReference>
<dbReference type="SUPFAM" id="SSF46458">
    <property type="entry name" value="Globin-like"/>
    <property type="match status" value="1"/>
</dbReference>
<dbReference type="PROSITE" id="PS01033">
    <property type="entry name" value="GLOBIN"/>
    <property type="match status" value="1"/>
</dbReference>